<accession>Q7CLU4</accession>
<sequence>MAKTSMIHRDIKRAKLAKKFAGKRDALKKILSSQDASYEEKIDASTKLQKLPRDSSPSRHRNRCELSGRPRGVYRKFGLGRNMLRKATMNGDVPGLRKASW</sequence>
<protein>
    <recommendedName>
        <fullName evidence="1">Small ribosomal subunit protein uS14</fullName>
    </recommendedName>
    <alternativeName>
        <fullName evidence="3">30S ribosomal protein S14</fullName>
    </alternativeName>
</protein>
<dbReference type="EMBL" id="AE008922">
    <property type="protein sequence ID" value="AAM40218.1"/>
    <property type="molecule type" value="Genomic_DNA"/>
</dbReference>
<dbReference type="RefSeq" id="NP_636294.1">
    <property type="nucleotide sequence ID" value="NC_003902.1"/>
</dbReference>
<dbReference type="RefSeq" id="WP_005917137.1">
    <property type="nucleotide sequence ID" value="NC_003902.1"/>
</dbReference>
<dbReference type="SMR" id="Q7CLU4"/>
<dbReference type="STRING" id="190485.XCC0908"/>
<dbReference type="EnsemblBacteria" id="AAM40218">
    <property type="protein sequence ID" value="AAM40218"/>
    <property type="gene ID" value="XCC0908"/>
</dbReference>
<dbReference type="GeneID" id="97210517"/>
<dbReference type="KEGG" id="xcc:XCC0908"/>
<dbReference type="PATRIC" id="fig|190485.4.peg.980"/>
<dbReference type="eggNOG" id="COG0199">
    <property type="taxonomic scope" value="Bacteria"/>
</dbReference>
<dbReference type="HOGENOM" id="CLU_139869_0_1_6"/>
<dbReference type="OrthoDB" id="9810484at2"/>
<dbReference type="PRO" id="PR:Q7CLU4"/>
<dbReference type="Proteomes" id="UP000001010">
    <property type="component" value="Chromosome"/>
</dbReference>
<dbReference type="GO" id="GO:0005737">
    <property type="term" value="C:cytoplasm"/>
    <property type="evidence" value="ECO:0007669"/>
    <property type="project" value="UniProtKB-ARBA"/>
</dbReference>
<dbReference type="GO" id="GO:0015935">
    <property type="term" value="C:small ribosomal subunit"/>
    <property type="evidence" value="ECO:0000318"/>
    <property type="project" value="GO_Central"/>
</dbReference>
<dbReference type="GO" id="GO:0019843">
    <property type="term" value="F:rRNA binding"/>
    <property type="evidence" value="ECO:0007669"/>
    <property type="project" value="UniProtKB-UniRule"/>
</dbReference>
<dbReference type="GO" id="GO:0003735">
    <property type="term" value="F:structural constituent of ribosome"/>
    <property type="evidence" value="ECO:0000318"/>
    <property type="project" value="GO_Central"/>
</dbReference>
<dbReference type="GO" id="GO:0006412">
    <property type="term" value="P:translation"/>
    <property type="evidence" value="ECO:0000318"/>
    <property type="project" value="GO_Central"/>
</dbReference>
<dbReference type="FunFam" id="1.10.287.1480:FF:000001">
    <property type="entry name" value="30S ribosomal protein S14"/>
    <property type="match status" value="1"/>
</dbReference>
<dbReference type="Gene3D" id="1.10.287.1480">
    <property type="match status" value="1"/>
</dbReference>
<dbReference type="HAMAP" id="MF_00537">
    <property type="entry name" value="Ribosomal_uS14_1"/>
    <property type="match status" value="1"/>
</dbReference>
<dbReference type="InterPro" id="IPR001209">
    <property type="entry name" value="Ribosomal_uS14"/>
</dbReference>
<dbReference type="InterPro" id="IPR023036">
    <property type="entry name" value="Ribosomal_uS14_bac/plastid"/>
</dbReference>
<dbReference type="NCBIfam" id="NF006477">
    <property type="entry name" value="PRK08881.1"/>
    <property type="match status" value="1"/>
</dbReference>
<dbReference type="PANTHER" id="PTHR19836">
    <property type="entry name" value="30S RIBOSOMAL PROTEIN S14"/>
    <property type="match status" value="1"/>
</dbReference>
<dbReference type="PANTHER" id="PTHR19836:SF19">
    <property type="entry name" value="SMALL RIBOSOMAL SUBUNIT PROTEIN US14M"/>
    <property type="match status" value="1"/>
</dbReference>
<dbReference type="Pfam" id="PF00253">
    <property type="entry name" value="Ribosomal_S14"/>
    <property type="match status" value="1"/>
</dbReference>
<dbReference type="SUPFAM" id="SSF57716">
    <property type="entry name" value="Glucocorticoid receptor-like (DNA-binding domain)"/>
    <property type="match status" value="1"/>
</dbReference>
<comment type="function">
    <text evidence="1">Binds 16S rRNA, required for the assembly of 30S particles and may also be responsible for determining the conformation of the 16S rRNA at the A site.</text>
</comment>
<comment type="subunit">
    <text evidence="1">Part of the 30S ribosomal subunit. Contacts proteins S3 and S10.</text>
</comment>
<comment type="similarity">
    <text evidence="1">Belongs to the universal ribosomal protein uS14 family.</text>
</comment>
<organism>
    <name type="scientific">Xanthomonas campestris pv. campestris (strain ATCC 33913 / DSM 3586 / NCPPB 528 / LMG 568 / P 25)</name>
    <dbReference type="NCBI Taxonomy" id="190485"/>
    <lineage>
        <taxon>Bacteria</taxon>
        <taxon>Pseudomonadati</taxon>
        <taxon>Pseudomonadota</taxon>
        <taxon>Gammaproteobacteria</taxon>
        <taxon>Lysobacterales</taxon>
        <taxon>Lysobacteraceae</taxon>
        <taxon>Xanthomonas</taxon>
    </lineage>
</organism>
<evidence type="ECO:0000255" key="1">
    <source>
        <dbReference type="HAMAP-Rule" id="MF_00537"/>
    </source>
</evidence>
<evidence type="ECO:0000256" key="2">
    <source>
        <dbReference type="SAM" id="MobiDB-lite"/>
    </source>
</evidence>
<evidence type="ECO:0000305" key="3"/>
<evidence type="ECO:0000312" key="4">
    <source>
        <dbReference type="EMBL" id="AAM40218.1"/>
    </source>
</evidence>
<name>RS14_XANCP</name>
<feature type="chain" id="PRO_1000128642" description="Small ribosomal subunit protein uS14">
    <location>
        <begin position="1"/>
        <end position="101"/>
    </location>
</feature>
<feature type="region of interest" description="Disordered" evidence="2">
    <location>
        <begin position="33"/>
        <end position="69"/>
    </location>
</feature>
<feature type="compositionally biased region" description="Basic and acidic residues" evidence="2">
    <location>
        <begin position="51"/>
        <end position="68"/>
    </location>
</feature>
<gene>
    <name evidence="1" type="primary">rpsN</name>
    <name evidence="4" type="ordered locus">XCC0908</name>
</gene>
<proteinExistence type="inferred from homology"/>
<keyword id="KW-1185">Reference proteome</keyword>
<keyword id="KW-0687">Ribonucleoprotein</keyword>
<keyword id="KW-0689">Ribosomal protein</keyword>
<keyword id="KW-0694">RNA-binding</keyword>
<keyword id="KW-0699">rRNA-binding</keyword>
<reference key="1">
    <citation type="journal article" date="2002" name="Nature">
        <title>Comparison of the genomes of two Xanthomonas pathogens with differing host specificities.</title>
        <authorList>
            <person name="da Silva A.C.R."/>
            <person name="Ferro J.A."/>
            <person name="Reinach F.C."/>
            <person name="Farah C.S."/>
            <person name="Furlan L.R."/>
            <person name="Quaggio R.B."/>
            <person name="Monteiro-Vitorello C.B."/>
            <person name="Van Sluys M.A."/>
            <person name="Almeida N.F. Jr."/>
            <person name="Alves L.M.C."/>
            <person name="do Amaral A.M."/>
            <person name="Bertolini M.C."/>
            <person name="Camargo L.E.A."/>
            <person name="Camarotte G."/>
            <person name="Cannavan F."/>
            <person name="Cardozo J."/>
            <person name="Chambergo F."/>
            <person name="Ciapina L.P."/>
            <person name="Cicarelli R.M.B."/>
            <person name="Coutinho L.L."/>
            <person name="Cursino-Santos J.R."/>
            <person name="El-Dorry H."/>
            <person name="Faria J.B."/>
            <person name="Ferreira A.J.S."/>
            <person name="Ferreira R.C.C."/>
            <person name="Ferro M.I.T."/>
            <person name="Formighieri E.F."/>
            <person name="Franco M.C."/>
            <person name="Greggio C.C."/>
            <person name="Gruber A."/>
            <person name="Katsuyama A.M."/>
            <person name="Kishi L.T."/>
            <person name="Leite R.P."/>
            <person name="Lemos E.G.M."/>
            <person name="Lemos M.V.F."/>
            <person name="Locali E.C."/>
            <person name="Machado M.A."/>
            <person name="Madeira A.M.B.N."/>
            <person name="Martinez-Rossi N.M."/>
            <person name="Martins E.C."/>
            <person name="Meidanis J."/>
            <person name="Menck C.F.M."/>
            <person name="Miyaki C.Y."/>
            <person name="Moon D.H."/>
            <person name="Moreira L.M."/>
            <person name="Novo M.T.M."/>
            <person name="Okura V.K."/>
            <person name="Oliveira M.C."/>
            <person name="Oliveira V.R."/>
            <person name="Pereira H.A."/>
            <person name="Rossi A."/>
            <person name="Sena J.A.D."/>
            <person name="Silva C."/>
            <person name="de Souza R.F."/>
            <person name="Spinola L.A.F."/>
            <person name="Takita M.A."/>
            <person name="Tamura R.E."/>
            <person name="Teixeira E.C."/>
            <person name="Tezza R.I.D."/>
            <person name="Trindade dos Santos M."/>
            <person name="Truffi D."/>
            <person name="Tsai S.M."/>
            <person name="White F.F."/>
            <person name="Setubal J.C."/>
            <person name="Kitajima J.P."/>
        </authorList>
    </citation>
    <scope>NUCLEOTIDE SEQUENCE [LARGE SCALE GENOMIC DNA]</scope>
    <source>
        <strain>ATCC 33913 / DSM 3586 / NCPPB 528 / LMG 568 / P 25</strain>
    </source>
</reference>